<protein>
    <recommendedName>
        <fullName evidence="1">Glycerol kinase</fullName>
        <ecNumber evidence="1">2.7.1.30</ecNumber>
    </recommendedName>
    <alternativeName>
        <fullName evidence="1">ATP:glycerol 3-phosphotransferase</fullName>
    </alternativeName>
    <alternativeName>
        <fullName evidence="1">Glycerokinase</fullName>
        <shortName evidence="1">GK</shortName>
    </alternativeName>
</protein>
<comment type="function">
    <text evidence="1">Key enzyme in the regulation of glycerol uptake and metabolism. Catalyzes the phosphorylation of glycerol to yield sn-glycerol 3-phosphate.</text>
</comment>
<comment type="catalytic activity">
    <reaction evidence="1">
        <text>glycerol + ATP = sn-glycerol 3-phosphate + ADP + H(+)</text>
        <dbReference type="Rhea" id="RHEA:21644"/>
        <dbReference type="ChEBI" id="CHEBI:15378"/>
        <dbReference type="ChEBI" id="CHEBI:17754"/>
        <dbReference type="ChEBI" id="CHEBI:30616"/>
        <dbReference type="ChEBI" id="CHEBI:57597"/>
        <dbReference type="ChEBI" id="CHEBI:456216"/>
        <dbReference type="EC" id="2.7.1.30"/>
    </reaction>
</comment>
<comment type="activity regulation">
    <text evidence="1">Inhibited by fructose 1,6-bisphosphate (FBP).</text>
</comment>
<comment type="pathway">
    <text evidence="1">Polyol metabolism; glycerol degradation via glycerol kinase pathway; sn-glycerol 3-phosphate from glycerol: step 1/1.</text>
</comment>
<comment type="similarity">
    <text evidence="1">Belongs to the FGGY kinase family.</text>
</comment>
<dbReference type="EC" id="2.7.1.30" evidence="1"/>
<dbReference type="EMBL" id="AM286280">
    <property type="protein sequence ID" value="CAL08146.1"/>
    <property type="molecule type" value="Genomic_DNA"/>
</dbReference>
<dbReference type="RefSeq" id="WP_003019887.1">
    <property type="nucleotide sequence ID" value="NC_008245.1"/>
</dbReference>
<dbReference type="SMR" id="Q14JU8"/>
<dbReference type="KEGG" id="ftf:FTF0130"/>
<dbReference type="HOGENOM" id="CLU_009281_2_3_6"/>
<dbReference type="UniPathway" id="UPA00618">
    <property type="reaction ID" value="UER00672"/>
</dbReference>
<dbReference type="GO" id="GO:0005829">
    <property type="term" value="C:cytosol"/>
    <property type="evidence" value="ECO:0007669"/>
    <property type="project" value="TreeGrafter"/>
</dbReference>
<dbReference type="GO" id="GO:0005524">
    <property type="term" value="F:ATP binding"/>
    <property type="evidence" value="ECO:0007669"/>
    <property type="project" value="UniProtKB-UniRule"/>
</dbReference>
<dbReference type="GO" id="GO:0004370">
    <property type="term" value="F:glycerol kinase activity"/>
    <property type="evidence" value="ECO:0000250"/>
    <property type="project" value="UniProtKB"/>
</dbReference>
<dbReference type="GO" id="GO:0019563">
    <property type="term" value="P:glycerol catabolic process"/>
    <property type="evidence" value="ECO:0007669"/>
    <property type="project" value="UniProtKB-UniRule"/>
</dbReference>
<dbReference type="GO" id="GO:0006071">
    <property type="term" value="P:glycerol metabolic process"/>
    <property type="evidence" value="ECO:0000250"/>
    <property type="project" value="UniProtKB"/>
</dbReference>
<dbReference type="GO" id="GO:0006072">
    <property type="term" value="P:glycerol-3-phosphate metabolic process"/>
    <property type="evidence" value="ECO:0007669"/>
    <property type="project" value="InterPro"/>
</dbReference>
<dbReference type="CDD" id="cd07786">
    <property type="entry name" value="FGGY_EcGK_like"/>
    <property type="match status" value="1"/>
</dbReference>
<dbReference type="FunFam" id="3.30.420.40:FF:000007">
    <property type="entry name" value="Glycerol kinase"/>
    <property type="match status" value="1"/>
</dbReference>
<dbReference type="FunFam" id="3.30.420.40:FF:000008">
    <property type="entry name" value="Glycerol kinase"/>
    <property type="match status" value="1"/>
</dbReference>
<dbReference type="Gene3D" id="3.30.420.40">
    <property type="match status" value="2"/>
</dbReference>
<dbReference type="HAMAP" id="MF_00186">
    <property type="entry name" value="Glycerol_kin"/>
    <property type="match status" value="1"/>
</dbReference>
<dbReference type="InterPro" id="IPR043129">
    <property type="entry name" value="ATPase_NBD"/>
</dbReference>
<dbReference type="InterPro" id="IPR000577">
    <property type="entry name" value="Carb_kinase_FGGY"/>
</dbReference>
<dbReference type="InterPro" id="IPR018483">
    <property type="entry name" value="Carb_kinase_FGGY_CS"/>
</dbReference>
<dbReference type="InterPro" id="IPR018485">
    <property type="entry name" value="FGGY_C"/>
</dbReference>
<dbReference type="InterPro" id="IPR018484">
    <property type="entry name" value="FGGY_N"/>
</dbReference>
<dbReference type="InterPro" id="IPR005999">
    <property type="entry name" value="Glycerol_kin"/>
</dbReference>
<dbReference type="NCBIfam" id="TIGR01311">
    <property type="entry name" value="glycerol_kin"/>
    <property type="match status" value="1"/>
</dbReference>
<dbReference type="NCBIfam" id="NF000756">
    <property type="entry name" value="PRK00047.1"/>
    <property type="match status" value="1"/>
</dbReference>
<dbReference type="PANTHER" id="PTHR10196:SF69">
    <property type="entry name" value="GLYCEROL KINASE"/>
    <property type="match status" value="1"/>
</dbReference>
<dbReference type="PANTHER" id="PTHR10196">
    <property type="entry name" value="SUGAR KINASE"/>
    <property type="match status" value="1"/>
</dbReference>
<dbReference type="Pfam" id="PF02782">
    <property type="entry name" value="FGGY_C"/>
    <property type="match status" value="1"/>
</dbReference>
<dbReference type="Pfam" id="PF00370">
    <property type="entry name" value="FGGY_N"/>
    <property type="match status" value="1"/>
</dbReference>
<dbReference type="PIRSF" id="PIRSF000538">
    <property type="entry name" value="GlpK"/>
    <property type="match status" value="1"/>
</dbReference>
<dbReference type="SUPFAM" id="SSF53067">
    <property type="entry name" value="Actin-like ATPase domain"/>
    <property type="match status" value="2"/>
</dbReference>
<dbReference type="PROSITE" id="PS00933">
    <property type="entry name" value="FGGY_KINASES_1"/>
    <property type="match status" value="1"/>
</dbReference>
<dbReference type="PROSITE" id="PS00445">
    <property type="entry name" value="FGGY_KINASES_2"/>
    <property type="match status" value="1"/>
</dbReference>
<name>GLPK_FRAT1</name>
<gene>
    <name evidence="1" type="primary">glpK</name>
    <name type="ordered locus">FTF0130</name>
</gene>
<evidence type="ECO:0000255" key="1">
    <source>
        <dbReference type="HAMAP-Rule" id="MF_00186"/>
    </source>
</evidence>
<reference key="1">
    <citation type="journal article" date="2007" name="PLoS ONE">
        <title>Genome sequencing shows that European isolates of Francisella tularensis subspecies tularensis are almost identical to US laboratory strain Schu S4.</title>
        <authorList>
            <person name="Chaudhuri R.R."/>
            <person name="Ren C.-P."/>
            <person name="Desmond L."/>
            <person name="Vincent G.A."/>
            <person name="Silman N.J."/>
            <person name="Brehm J.K."/>
            <person name="Elmore M.J."/>
            <person name="Hudson M.J."/>
            <person name="Forsman M."/>
            <person name="Isherwood K.E."/>
            <person name="Gurycova D."/>
            <person name="Minton N.P."/>
            <person name="Titball R.W."/>
            <person name="Pallen M.J."/>
            <person name="Vipond R."/>
        </authorList>
    </citation>
    <scope>NUCLEOTIDE SEQUENCE [LARGE SCALE GENOMIC DNA]</scope>
    <source>
        <strain>FSC 198</strain>
    </source>
</reference>
<organism>
    <name type="scientific">Francisella tularensis subsp. tularensis (strain FSC 198)</name>
    <dbReference type="NCBI Taxonomy" id="393115"/>
    <lineage>
        <taxon>Bacteria</taxon>
        <taxon>Pseudomonadati</taxon>
        <taxon>Pseudomonadota</taxon>
        <taxon>Gammaproteobacteria</taxon>
        <taxon>Thiotrichales</taxon>
        <taxon>Francisellaceae</taxon>
        <taxon>Francisella</taxon>
    </lineage>
</organism>
<proteinExistence type="inferred from homology"/>
<keyword id="KW-0067">ATP-binding</keyword>
<keyword id="KW-0319">Glycerol metabolism</keyword>
<keyword id="KW-0418">Kinase</keyword>
<keyword id="KW-0547">Nucleotide-binding</keyword>
<keyword id="KW-0808">Transferase</keyword>
<feature type="chain" id="PRO_1000058447" description="Glycerol kinase">
    <location>
        <begin position="1"/>
        <end position="502"/>
    </location>
</feature>
<feature type="binding site" evidence="1">
    <location>
        <position position="13"/>
    </location>
    <ligand>
        <name>ADP</name>
        <dbReference type="ChEBI" id="CHEBI:456216"/>
    </ligand>
</feature>
<feature type="binding site" evidence="1">
    <location>
        <position position="13"/>
    </location>
    <ligand>
        <name>ATP</name>
        <dbReference type="ChEBI" id="CHEBI:30616"/>
    </ligand>
</feature>
<feature type="binding site" evidence="1">
    <location>
        <position position="13"/>
    </location>
    <ligand>
        <name>sn-glycerol 3-phosphate</name>
        <dbReference type="ChEBI" id="CHEBI:57597"/>
    </ligand>
</feature>
<feature type="binding site" evidence="1">
    <location>
        <position position="14"/>
    </location>
    <ligand>
        <name>ATP</name>
        <dbReference type="ChEBI" id="CHEBI:30616"/>
    </ligand>
</feature>
<feature type="binding site" evidence="1">
    <location>
        <position position="15"/>
    </location>
    <ligand>
        <name>ATP</name>
        <dbReference type="ChEBI" id="CHEBI:30616"/>
    </ligand>
</feature>
<feature type="binding site" evidence="1">
    <location>
        <position position="17"/>
    </location>
    <ligand>
        <name>ADP</name>
        <dbReference type="ChEBI" id="CHEBI:456216"/>
    </ligand>
</feature>
<feature type="binding site" evidence="1">
    <location>
        <position position="83"/>
    </location>
    <ligand>
        <name>glycerol</name>
        <dbReference type="ChEBI" id="CHEBI:17754"/>
    </ligand>
</feature>
<feature type="binding site" evidence="1">
    <location>
        <position position="83"/>
    </location>
    <ligand>
        <name>sn-glycerol 3-phosphate</name>
        <dbReference type="ChEBI" id="CHEBI:57597"/>
    </ligand>
</feature>
<feature type="binding site" evidence="1">
    <location>
        <position position="84"/>
    </location>
    <ligand>
        <name>glycerol</name>
        <dbReference type="ChEBI" id="CHEBI:17754"/>
    </ligand>
</feature>
<feature type="binding site" evidence="1">
    <location>
        <position position="84"/>
    </location>
    <ligand>
        <name>sn-glycerol 3-phosphate</name>
        <dbReference type="ChEBI" id="CHEBI:57597"/>
    </ligand>
</feature>
<feature type="binding site" evidence="1">
    <location>
        <position position="136"/>
    </location>
    <ligand>
        <name>glycerol</name>
        <dbReference type="ChEBI" id="CHEBI:17754"/>
    </ligand>
</feature>
<feature type="binding site" evidence="1">
    <location>
        <position position="136"/>
    </location>
    <ligand>
        <name>sn-glycerol 3-phosphate</name>
        <dbReference type="ChEBI" id="CHEBI:57597"/>
    </ligand>
</feature>
<feature type="binding site" evidence="1">
    <location>
        <position position="246"/>
    </location>
    <ligand>
        <name>glycerol</name>
        <dbReference type="ChEBI" id="CHEBI:17754"/>
    </ligand>
</feature>
<feature type="binding site" evidence="1">
    <location>
        <position position="246"/>
    </location>
    <ligand>
        <name>sn-glycerol 3-phosphate</name>
        <dbReference type="ChEBI" id="CHEBI:57597"/>
    </ligand>
</feature>
<feature type="binding site" evidence="1">
    <location>
        <position position="247"/>
    </location>
    <ligand>
        <name>glycerol</name>
        <dbReference type="ChEBI" id="CHEBI:17754"/>
    </ligand>
</feature>
<feature type="binding site" evidence="1">
    <location>
        <position position="268"/>
    </location>
    <ligand>
        <name>ADP</name>
        <dbReference type="ChEBI" id="CHEBI:456216"/>
    </ligand>
</feature>
<feature type="binding site" evidence="1">
    <location>
        <position position="268"/>
    </location>
    <ligand>
        <name>ATP</name>
        <dbReference type="ChEBI" id="CHEBI:30616"/>
    </ligand>
</feature>
<feature type="binding site" evidence="1">
    <location>
        <position position="311"/>
    </location>
    <ligand>
        <name>ADP</name>
        <dbReference type="ChEBI" id="CHEBI:456216"/>
    </ligand>
</feature>
<feature type="binding site" evidence="1">
    <location>
        <position position="311"/>
    </location>
    <ligand>
        <name>ATP</name>
        <dbReference type="ChEBI" id="CHEBI:30616"/>
    </ligand>
</feature>
<feature type="binding site" evidence="1">
    <location>
        <position position="315"/>
    </location>
    <ligand>
        <name>ATP</name>
        <dbReference type="ChEBI" id="CHEBI:30616"/>
    </ligand>
</feature>
<feature type="binding site" evidence="1">
    <location>
        <position position="412"/>
    </location>
    <ligand>
        <name>ADP</name>
        <dbReference type="ChEBI" id="CHEBI:456216"/>
    </ligand>
</feature>
<feature type="binding site" evidence="1">
    <location>
        <position position="412"/>
    </location>
    <ligand>
        <name>ATP</name>
        <dbReference type="ChEBI" id="CHEBI:30616"/>
    </ligand>
</feature>
<feature type="binding site" evidence="1">
    <location>
        <position position="416"/>
    </location>
    <ligand>
        <name>ADP</name>
        <dbReference type="ChEBI" id="CHEBI:456216"/>
    </ligand>
</feature>
<sequence>MSKDFILAVDQGTTSSRAIIFDKKGNIRKIAQKEFTQIYPKSGWVEHDAMEIWGTQSGVMREALEFGRVKPDQIAAIGITNQRETVVVWDKETGDPVYNAIVWQCRRTSSICDEIKRDPQFVKYIKENTGLVVDAYFSGTKVKWILDNVEGAREKANAGKLLMGTIDTWLIWNLTRGKVHATDYSNASRTMLFNINSLEWDKKILDYLNIPESMLPEVKNSSEVFGVTDSHTLGGAEIPIAGVAGDQHAALFGHCCFEKGMAKNTYGTGCFALMNVGDKPVYSDEGLLTTIAWAENGKPTYALEGSVFIAGAVIQWIRDGLGLVRSAEDSEYYATKIDSTNGVYLVPAFVGLGTPYWDMYARGTIVGITRDTKREHIIRAALEAIAYQAKDVLECMKEDTGLDLAGLRVDGGAVQNNFLMQFQSDILQSEISKPKVNEITGLGAVFLAGLAVGFWKDKQELKSILTTEKVFEPQKDSQAVAHDYRGWKKAVERSKAWAECYS</sequence>
<accession>Q14JU8</accession>